<accession>Q82JR8</accession>
<comment type="function">
    <text evidence="1">Catalyzes the isomerization between 2-isopropylmalate and 3-isopropylmalate, via the formation of 2-isopropylmaleate.</text>
</comment>
<comment type="catalytic activity">
    <reaction evidence="1">
        <text>(2R,3S)-3-isopropylmalate = (2S)-2-isopropylmalate</text>
        <dbReference type="Rhea" id="RHEA:32287"/>
        <dbReference type="ChEBI" id="CHEBI:1178"/>
        <dbReference type="ChEBI" id="CHEBI:35121"/>
        <dbReference type="EC" id="4.2.1.33"/>
    </reaction>
</comment>
<comment type="cofactor">
    <cofactor evidence="1">
        <name>[4Fe-4S] cluster</name>
        <dbReference type="ChEBI" id="CHEBI:49883"/>
    </cofactor>
    <text evidence="1">Binds 1 [4Fe-4S] cluster per subunit.</text>
</comment>
<comment type="pathway">
    <text evidence="1">Amino-acid biosynthesis; L-leucine biosynthesis; L-leucine from 3-methyl-2-oxobutanoate: step 2/4.</text>
</comment>
<comment type="subunit">
    <text evidence="1">Heterodimer of LeuC and LeuD.</text>
</comment>
<comment type="similarity">
    <text evidence="1">Belongs to the aconitase/IPM isomerase family. LeuC type 1 subfamily.</text>
</comment>
<proteinExistence type="inferred from homology"/>
<name>LEUC_STRAW</name>
<gene>
    <name evidence="1" type="primary">leuC</name>
    <name type="ordered locus">SAV_2686</name>
</gene>
<keyword id="KW-0004">4Fe-4S</keyword>
<keyword id="KW-0028">Amino-acid biosynthesis</keyword>
<keyword id="KW-0100">Branched-chain amino acid biosynthesis</keyword>
<keyword id="KW-0408">Iron</keyword>
<keyword id="KW-0411">Iron-sulfur</keyword>
<keyword id="KW-0432">Leucine biosynthesis</keyword>
<keyword id="KW-0456">Lyase</keyword>
<keyword id="KW-0479">Metal-binding</keyword>
<keyword id="KW-1185">Reference proteome</keyword>
<evidence type="ECO:0000255" key="1">
    <source>
        <dbReference type="HAMAP-Rule" id="MF_01026"/>
    </source>
</evidence>
<evidence type="ECO:0000256" key="2">
    <source>
        <dbReference type="SAM" id="MobiDB-lite"/>
    </source>
</evidence>
<dbReference type="EC" id="4.2.1.33" evidence="1"/>
<dbReference type="EMBL" id="BA000030">
    <property type="protein sequence ID" value="BAC70397.1"/>
    <property type="molecule type" value="Genomic_DNA"/>
</dbReference>
<dbReference type="RefSeq" id="WP_010984118.1">
    <property type="nucleotide sequence ID" value="NZ_JZJK01000071.1"/>
</dbReference>
<dbReference type="SMR" id="Q82JR8"/>
<dbReference type="GeneID" id="41539770"/>
<dbReference type="KEGG" id="sma:SAVERM_2686"/>
<dbReference type="eggNOG" id="COG0065">
    <property type="taxonomic scope" value="Bacteria"/>
</dbReference>
<dbReference type="HOGENOM" id="CLU_006714_3_4_11"/>
<dbReference type="OrthoDB" id="9802769at2"/>
<dbReference type="UniPathway" id="UPA00048">
    <property type="reaction ID" value="UER00071"/>
</dbReference>
<dbReference type="Proteomes" id="UP000000428">
    <property type="component" value="Chromosome"/>
</dbReference>
<dbReference type="GO" id="GO:0003861">
    <property type="term" value="F:3-isopropylmalate dehydratase activity"/>
    <property type="evidence" value="ECO:0007669"/>
    <property type="project" value="UniProtKB-UniRule"/>
</dbReference>
<dbReference type="GO" id="GO:0051539">
    <property type="term" value="F:4 iron, 4 sulfur cluster binding"/>
    <property type="evidence" value="ECO:0007669"/>
    <property type="project" value="UniProtKB-KW"/>
</dbReference>
<dbReference type="GO" id="GO:0046872">
    <property type="term" value="F:metal ion binding"/>
    <property type="evidence" value="ECO:0007669"/>
    <property type="project" value="UniProtKB-KW"/>
</dbReference>
<dbReference type="GO" id="GO:0009098">
    <property type="term" value="P:L-leucine biosynthetic process"/>
    <property type="evidence" value="ECO:0007669"/>
    <property type="project" value="UniProtKB-UniRule"/>
</dbReference>
<dbReference type="CDD" id="cd01583">
    <property type="entry name" value="IPMI"/>
    <property type="match status" value="1"/>
</dbReference>
<dbReference type="FunFam" id="3.30.499.10:FF:000007">
    <property type="entry name" value="3-isopropylmalate dehydratase large subunit"/>
    <property type="match status" value="1"/>
</dbReference>
<dbReference type="Gene3D" id="3.30.499.10">
    <property type="entry name" value="Aconitase, domain 3"/>
    <property type="match status" value="2"/>
</dbReference>
<dbReference type="HAMAP" id="MF_01026">
    <property type="entry name" value="LeuC_type1"/>
    <property type="match status" value="1"/>
</dbReference>
<dbReference type="InterPro" id="IPR004430">
    <property type="entry name" value="3-IsopropMal_deHydase_lsu"/>
</dbReference>
<dbReference type="InterPro" id="IPR015931">
    <property type="entry name" value="Acnase/IPM_dHydase_lsu_aba_1/3"/>
</dbReference>
<dbReference type="InterPro" id="IPR001030">
    <property type="entry name" value="Acoase/IPM_deHydtase_lsu_aba"/>
</dbReference>
<dbReference type="InterPro" id="IPR018136">
    <property type="entry name" value="Aconitase_4Fe-4S_BS"/>
</dbReference>
<dbReference type="InterPro" id="IPR036008">
    <property type="entry name" value="Aconitase_4Fe-4S_dom"/>
</dbReference>
<dbReference type="InterPro" id="IPR050067">
    <property type="entry name" value="IPM_dehydratase_rel_enz"/>
</dbReference>
<dbReference type="InterPro" id="IPR033941">
    <property type="entry name" value="IPMI_cat"/>
</dbReference>
<dbReference type="NCBIfam" id="TIGR00170">
    <property type="entry name" value="leuC"/>
    <property type="match status" value="1"/>
</dbReference>
<dbReference type="NCBIfam" id="NF004016">
    <property type="entry name" value="PRK05478.1"/>
    <property type="match status" value="1"/>
</dbReference>
<dbReference type="NCBIfam" id="NF009116">
    <property type="entry name" value="PRK12466.1"/>
    <property type="match status" value="1"/>
</dbReference>
<dbReference type="PANTHER" id="PTHR43822:SF9">
    <property type="entry name" value="3-ISOPROPYLMALATE DEHYDRATASE"/>
    <property type="match status" value="1"/>
</dbReference>
<dbReference type="PANTHER" id="PTHR43822">
    <property type="entry name" value="HOMOACONITASE, MITOCHONDRIAL-RELATED"/>
    <property type="match status" value="1"/>
</dbReference>
<dbReference type="Pfam" id="PF00330">
    <property type="entry name" value="Aconitase"/>
    <property type="match status" value="1"/>
</dbReference>
<dbReference type="PRINTS" id="PR00415">
    <property type="entry name" value="ACONITASE"/>
</dbReference>
<dbReference type="SUPFAM" id="SSF53732">
    <property type="entry name" value="Aconitase iron-sulfur domain"/>
    <property type="match status" value="1"/>
</dbReference>
<dbReference type="PROSITE" id="PS00450">
    <property type="entry name" value="ACONITASE_1"/>
    <property type="match status" value="1"/>
</dbReference>
<dbReference type="PROSITE" id="PS01244">
    <property type="entry name" value="ACONITASE_2"/>
    <property type="match status" value="1"/>
</dbReference>
<feature type="chain" id="PRO_0000076825" description="3-isopropylmalate dehydratase large subunit">
    <location>
        <begin position="1"/>
        <end position="477"/>
    </location>
</feature>
<feature type="region of interest" description="Disordered" evidence="2">
    <location>
        <begin position="418"/>
        <end position="442"/>
    </location>
</feature>
<feature type="binding site" evidence="1">
    <location>
        <position position="347"/>
    </location>
    <ligand>
        <name>[4Fe-4S] cluster</name>
        <dbReference type="ChEBI" id="CHEBI:49883"/>
    </ligand>
</feature>
<feature type="binding site" evidence="1">
    <location>
        <position position="407"/>
    </location>
    <ligand>
        <name>[4Fe-4S] cluster</name>
        <dbReference type="ChEBI" id="CHEBI:49883"/>
    </ligand>
</feature>
<feature type="binding site" evidence="1">
    <location>
        <position position="410"/>
    </location>
    <ligand>
        <name>[4Fe-4S] cluster</name>
        <dbReference type="ChEBI" id="CHEBI:49883"/>
    </ligand>
</feature>
<sequence>MGRTLAEKVWDDHVVRRAEGEPDLLFIDLHLLHEVTSPQAFDGLRQAGRPVRRLDLTIATEDHNTPTLDIDKPIADPVSRAQLETLRKNCAEFGVRLHSLGDVEQGVVHVVGPQLGLTQPGTTVVCGDSHTSTHGAFGALAFGIGTSQVEHVLATQTLPLARPKTMAITVDGELPDGVTAKDLILAIIARIGTGGGQGYILEYRGSAIEKLSMEARMTICNMSIEAGARAGMIAPDETTFAYLKGRAHAPEGEEWDAAVAYWKTLKSDEDAEFDAEVVIAAAALSPFVTWGTNPGQGAPLSASVPDPASYEDASERFAAEKALEYMGLTAGQPLRDIKVDTVFVGSCTNGRIEDLRAAAAIVEGRKVADGVRMLIVPGSARVGLQAVSEGLDVVFKEAGAEWRHAGCSMCLGMNPDQLAPGERSASTSNRNFEGRQGKGGRTHLVSPQVAAATAVLGHLASPADLADENAARTPAGV</sequence>
<reference key="1">
    <citation type="journal article" date="2001" name="Proc. Natl. Acad. Sci. U.S.A.">
        <title>Genome sequence of an industrial microorganism Streptomyces avermitilis: deducing the ability of producing secondary metabolites.</title>
        <authorList>
            <person name="Omura S."/>
            <person name="Ikeda H."/>
            <person name="Ishikawa J."/>
            <person name="Hanamoto A."/>
            <person name="Takahashi C."/>
            <person name="Shinose M."/>
            <person name="Takahashi Y."/>
            <person name="Horikawa H."/>
            <person name="Nakazawa H."/>
            <person name="Osonoe T."/>
            <person name="Kikuchi H."/>
            <person name="Shiba T."/>
            <person name="Sakaki Y."/>
            <person name="Hattori M."/>
        </authorList>
    </citation>
    <scope>NUCLEOTIDE SEQUENCE [LARGE SCALE GENOMIC DNA]</scope>
    <source>
        <strain>ATCC 31267 / DSM 46492 / JCM 5070 / NBRC 14893 / NCIMB 12804 / NRRL 8165 / MA-4680</strain>
    </source>
</reference>
<reference key="2">
    <citation type="journal article" date="2003" name="Nat. Biotechnol.">
        <title>Complete genome sequence and comparative analysis of the industrial microorganism Streptomyces avermitilis.</title>
        <authorList>
            <person name="Ikeda H."/>
            <person name="Ishikawa J."/>
            <person name="Hanamoto A."/>
            <person name="Shinose M."/>
            <person name="Kikuchi H."/>
            <person name="Shiba T."/>
            <person name="Sakaki Y."/>
            <person name="Hattori M."/>
            <person name="Omura S."/>
        </authorList>
    </citation>
    <scope>NUCLEOTIDE SEQUENCE [LARGE SCALE GENOMIC DNA]</scope>
    <source>
        <strain>ATCC 31267 / DSM 46492 / JCM 5070 / NBRC 14893 / NCIMB 12804 / NRRL 8165 / MA-4680</strain>
    </source>
</reference>
<organism>
    <name type="scientific">Streptomyces avermitilis (strain ATCC 31267 / DSM 46492 / JCM 5070 / NBRC 14893 / NCIMB 12804 / NRRL 8165 / MA-4680)</name>
    <dbReference type="NCBI Taxonomy" id="227882"/>
    <lineage>
        <taxon>Bacteria</taxon>
        <taxon>Bacillati</taxon>
        <taxon>Actinomycetota</taxon>
        <taxon>Actinomycetes</taxon>
        <taxon>Kitasatosporales</taxon>
        <taxon>Streptomycetaceae</taxon>
        <taxon>Streptomyces</taxon>
    </lineage>
</organism>
<protein>
    <recommendedName>
        <fullName evidence="1">3-isopropylmalate dehydratase large subunit</fullName>
        <ecNumber evidence="1">4.2.1.33</ecNumber>
    </recommendedName>
    <alternativeName>
        <fullName evidence="1">Alpha-IPM isomerase</fullName>
        <shortName evidence="1">IPMI</shortName>
    </alternativeName>
    <alternativeName>
        <fullName evidence="1">Isopropylmalate isomerase</fullName>
    </alternativeName>
</protein>